<proteinExistence type="evidence at protein level"/>
<accession>Q5FWF5</accession>
<accession>B0YJ11</accession>
<accession>B0YJ12</accession>
<accession>Q69YG4</accession>
<accession>Q69YS3</accession>
<accession>Q6IMD7</accession>
<accession>Q8N3Z5</accession>
<accession>Q8NBG2</accession>
<accession>Q96PX7</accession>
<comment type="function">
    <text evidence="2 4 5 6 7 8">Acetyltransferase required for the establishment of sister chromatid cohesion (PubMed:15958495, PubMed:18614053). Couples the processes of cohesion and DNA replication to ensure that only sister chromatids become paired together. In contrast to the structural cohesins, the deposition and establishment factors are required only during S phase. Acts by mediating the acetylation of cohesin component SMC3 (PubMed:18614053).</text>
</comment>
<comment type="catalytic activity">
    <reaction evidence="2 4 5">
        <text>L-lysyl-[protein] + acetyl-CoA = N(6)-acetyl-L-lysyl-[protein] + CoA + H(+)</text>
        <dbReference type="Rhea" id="RHEA:45948"/>
        <dbReference type="Rhea" id="RHEA-COMP:9752"/>
        <dbReference type="Rhea" id="RHEA-COMP:10731"/>
        <dbReference type="ChEBI" id="CHEBI:15378"/>
        <dbReference type="ChEBI" id="CHEBI:29969"/>
        <dbReference type="ChEBI" id="CHEBI:57287"/>
        <dbReference type="ChEBI" id="CHEBI:57288"/>
        <dbReference type="ChEBI" id="CHEBI:61930"/>
    </reaction>
</comment>
<comment type="biophysicochemical properties">
    <kinetics>
        <KM evidence="8">77 uM for acetyl-CoA</KM>
    </kinetics>
</comment>
<comment type="subunit">
    <text evidence="7 8 13">The subunit structure is controversial. Monomer (PubMed:27803161). Homodimer (PubMed:27112597).</text>
</comment>
<comment type="interaction">
    <interactant intactId="EBI-16205392">
        <id>Q5FWF5-1</id>
    </interactant>
    <interactant intactId="EBI-16205392">
        <id>Q5FWF5-1</id>
        <label>ESCO1</label>
    </interactant>
    <organismsDiffer>false</organismsDiffer>
    <experiments>3</experiments>
</comment>
<comment type="subcellular location">
    <subcellularLocation>
        <location evidence="2 4">Nucleus</location>
    </subcellularLocation>
    <subcellularLocation>
        <location evidence="4">Chromosome</location>
    </subcellularLocation>
    <text evidence="4">Nuclear at interphase, associated with chromosomes during mitosis.</text>
</comment>
<comment type="alternative products">
    <event type="alternative splicing"/>
    <isoform>
        <id>Q5FWF5-1</id>
        <name>1</name>
        <sequence type="displayed"/>
    </isoform>
    <isoform>
        <id>Q5FWF5-2</id>
        <name>2</name>
        <sequence type="described" ref="VSP_014029 VSP_014030"/>
    </isoform>
</comment>
<comment type="tissue specificity">
    <text evidence="2">Widely expressed. Expressed in heart, brain, liver, placenta, lung, kidney and pancreas. Highly expressed in muscle.</text>
</comment>
<comment type="domain">
    <text evidence="4">The N-terminal region seems to be responsible for association with chromosomes, thus excluding any involvement of the Zn finger in this process.</text>
</comment>
<comment type="PTM">
    <text evidence="4">Phosphorylated during mitosis, when associated with chromosomes.</text>
</comment>
<comment type="miscellaneous">
    <molecule>Isoform 2</molecule>
    <text evidence="13">May be produced at very low levels due to a premature stop codon in the mRNA, leading to nonsense-mediated mRNA decay.</text>
</comment>
<comment type="similarity">
    <text evidence="13">Belongs to the acetyltransferase family. ECO subfamily.</text>
</comment>
<comment type="caution">
    <text evidence="13">It is uncertain whether Met-1 or Met-2 is the initiator.</text>
</comment>
<comment type="sequence caution" evidence="13">
    <conflict type="miscellaneous discrepancy">
        <sequence resource="EMBL-CDS" id="AAH36943"/>
    </conflict>
    <text>Wrong choice of frame.</text>
</comment>
<comment type="sequence caution" evidence="13">
    <conflict type="erroneous initiation">
        <sequence resource="EMBL-CDS" id="BAB67804"/>
    </conflict>
    <text>Extended N-terminus.</text>
</comment>
<comment type="sequence caution" evidence="13">
    <conflict type="erroneous initiation">
        <sequence resource="EMBL-CDS" id="BAC03483"/>
    </conflict>
    <text>Truncated N-terminus.</text>
</comment>
<organism>
    <name type="scientific">Homo sapiens</name>
    <name type="common">Human</name>
    <dbReference type="NCBI Taxonomy" id="9606"/>
    <lineage>
        <taxon>Eukaryota</taxon>
        <taxon>Metazoa</taxon>
        <taxon>Chordata</taxon>
        <taxon>Craniata</taxon>
        <taxon>Vertebrata</taxon>
        <taxon>Euteleostomi</taxon>
        <taxon>Mammalia</taxon>
        <taxon>Eutheria</taxon>
        <taxon>Euarchontoglires</taxon>
        <taxon>Primates</taxon>
        <taxon>Haplorrhini</taxon>
        <taxon>Catarrhini</taxon>
        <taxon>Hominidae</taxon>
        <taxon>Homo</taxon>
    </lineage>
</organism>
<evidence type="ECO:0000256" key="1">
    <source>
        <dbReference type="SAM" id="MobiDB-lite"/>
    </source>
</evidence>
<evidence type="ECO:0000269" key="2">
    <source>
    </source>
</evidence>
<evidence type="ECO:0000269" key="3">
    <source>
    </source>
</evidence>
<evidence type="ECO:0000269" key="4">
    <source>
    </source>
</evidence>
<evidence type="ECO:0000269" key="5">
    <source>
    </source>
</evidence>
<evidence type="ECO:0000269" key="6">
    <source>
    </source>
</evidence>
<evidence type="ECO:0000269" key="7">
    <source>
    </source>
</evidence>
<evidence type="ECO:0000269" key="8">
    <source>
    </source>
</evidence>
<evidence type="ECO:0000303" key="9">
    <source>
    </source>
</evidence>
<evidence type="ECO:0000303" key="10">
    <source>
    </source>
</evidence>
<evidence type="ECO:0000303" key="11">
    <source>
    </source>
</evidence>
<evidence type="ECO:0000303" key="12">
    <source>
    </source>
</evidence>
<evidence type="ECO:0000305" key="13"/>
<evidence type="ECO:0007744" key="14">
    <source>
        <dbReference type="PDB" id="4MXE"/>
    </source>
</evidence>
<evidence type="ECO:0007744" key="15">
    <source>
        <dbReference type="PDB" id="5T53"/>
    </source>
</evidence>
<evidence type="ECO:0007744" key="16">
    <source>
    </source>
</evidence>
<evidence type="ECO:0007744" key="17">
    <source>
    </source>
</evidence>
<evidence type="ECO:0007744" key="18">
    <source>
    </source>
</evidence>
<evidence type="ECO:0007744" key="19">
    <source>
    </source>
</evidence>
<evidence type="ECO:0007829" key="20">
    <source>
        <dbReference type="PDB" id="4MXE"/>
    </source>
</evidence>
<evidence type="ECO:0007829" key="21">
    <source>
        <dbReference type="PDB" id="5T53"/>
    </source>
</evidence>
<name>ESCO1_HUMAN</name>
<sequence length="840" mass="94983">MMSIQEKSKENSSKVTKKSDDKNSETEIQDSQKNLAKKSGPKETIKSQAKSSSESKINQPELETRMSTRSSKAASNDKATKSINKNTVTVRGYSQESTKKKLSQKKLVHENPKANEQLNRRSQRLQQLTEVSRRSLRSREIQGQVQAVKQSLPPTKKEQCSSTQSKSNKTSQKHVKRKVLEVKSDSKEDENLVINEVINSPKGKKRKVEHQTACACSSQCTQGSEKCPQKTTRRDETKPVPVTSEVKRSKMATSVVPKKNEMKKSVHTQVNTNTTLPKSPQPSVPEQSDNELEQAGKSKRGSILQLCEEIAGEIESDNVEVKKESSQMESVKEEKPTEIKLEETSVERQILHQKETNQDVQCNRFFPSRKTKPVKCILNGINSSAKKNSNWTKIKLSKFNSVQHNKLDSQVSPKLGLLRTSFSPPALEMHHPVTQSTFLGTKLHDRNITCQQEKMKEINSEEVKINDITVEINKTTERAPENCHLANEIKPSDPPLDNQMKHSFDSASNKNFSQCLESKLENSPVENVTAASTLLSQAKIDTGENKFPGSAPQQHSILSNQTSKSSDNRETPRNHSLPKCNSHLEITIPKDLKLKEAEKTDEKQLIIDAGQKRFGAVSCNVCGMLYTASNPEDETQHLLFHNQFISAVKYVGWKKERILAEYPDGRIIMVLPEDPKYALKKVDEIREMVDNDLGFQQAPLMCYSRTKTLLFISNDKKVVGCLIAEHIQWGYRVIEEKLPVIRSEEEKVRFERQKAWCCSTLPEPAICGISRIWVFSMMRRKKIASRMIECLRSNFIYGSYLSKEEIAFSDPTPDGKLFATQYCGTGQFLVYNFINGQNST</sequence>
<keyword id="KW-0002">3D-structure</keyword>
<keyword id="KW-0012">Acyltransferase</keyword>
<keyword id="KW-0025">Alternative splicing</keyword>
<keyword id="KW-0131">Cell cycle</keyword>
<keyword id="KW-0158">Chromosome</keyword>
<keyword id="KW-1017">Isopeptide bond</keyword>
<keyword id="KW-0479">Metal-binding</keyword>
<keyword id="KW-0539">Nucleus</keyword>
<keyword id="KW-0597">Phosphoprotein</keyword>
<keyword id="KW-1267">Proteomics identification</keyword>
<keyword id="KW-1185">Reference proteome</keyword>
<keyword id="KW-0808">Transferase</keyword>
<keyword id="KW-0832">Ubl conjugation</keyword>
<keyword id="KW-0862">Zinc</keyword>
<keyword id="KW-0863">Zinc-finger</keyword>
<reference key="1">
    <citation type="journal article" date="2001" name="DNA Res.">
        <title>Prediction of the coding sequences of unidentified human genes. XXI. The complete sequences of 60 new cDNA clones from brain which code for large proteins.</title>
        <authorList>
            <person name="Nagase T."/>
            <person name="Kikuno R."/>
            <person name="Ohara O."/>
        </authorList>
    </citation>
    <scope>NUCLEOTIDE SEQUENCE [LARGE SCALE MRNA] (ISOFORM 1)</scope>
    <source>
        <tissue>Brain</tissue>
    </source>
</reference>
<reference key="2">
    <citation type="journal article" date="2007" name="BMC Genomics">
        <title>The full-ORF clone resource of the German cDNA consortium.</title>
        <authorList>
            <person name="Bechtel S."/>
            <person name="Rosenfelder H."/>
            <person name="Duda A."/>
            <person name="Schmidt C.P."/>
            <person name="Ernst U."/>
            <person name="Wellenreuther R."/>
            <person name="Mehrle A."/>
            <person name="Schuster C."/>
            <person name="Bahr A."/>
            <person name="Bloecker H."/>
            <person name="Heubner D."/>
            <person name="Hoerlein A."/>
            <person name="Michel G."/>
            <person name="Wedler H."/>
            <person name="Koehrer K."/>
            <person name="Ottenwaelder B."/>
            <person name="Poustka A."/>
            <person name="Wiemann S."/>
            <person name="Schupp I."/>
        </authorList>
    </citation>
    <scope>NUCLEOTIDE SEQUENCE [LARGE SCALE MRNA] (ISOFORM 2)</scope>
    <source>
        <tissue>Bone marrow</tissue>
        <tissue>Melanoma</tissue>
    </source>
</reference>
<reference key="3">
    <citation type="submission" date="2007-02" db="EMBL/GenBank/DDBJ databases">
        <authorList>
            <consortium name="NHLBI resequencing and genotyping service (RS&amp;G)"/>
        </authorList>
    </citation>
    <scope>NUCLEOTIDE SEQUENCE [GENOMIC DNA]</scope>
</reference>
<reference key="4">
    <citation type="submission" date="2005-07" db="EMBL/GenBank/DDBJ databases">
        <authorList>
            <person name="Mural R.J."/>
            <person name="Istrail S."/>
            <person name="Sutton G.G."/>
            <person name="Florea L."/>
            <person name="Halpern A.L."/>
            <person name="Mobarry C.M."/>
            <person name="Lippert R."/>
            <person name="Walenz B."/>
            <person name="Shatkay H."/>
            <person name="Dew I."/>
            <person name="Miller J.R."/>
            <person name="Flanigan M.J."/>
            <person name="Edwards N.J."/>
            <person name="Bolanos R."/>
            <person name="Fasulo D."/>
            <person name="Halldorsson B.V."/>
            <person name="Hannenhalli S."/>
            <person name="Turner R."/>
            <person name="Yooseph S."/>
            <person name="Lu F."/>
            <person name="Nusskern D.R."/>
            <person name="Shue B.C."/>
            <person name="Zheng X.H."/>
            <person name="Zhong F."/>
            <person name="Delcher A.L."/>
            <person name="Huson D.H."/>
            <person name="Kravitz S.A."/>
            <person name="Mouchard L."/>
            <person name="Reinert K."/>
            <person name="Remington K.A."/>
            <person name="Clark A.G."/>
            <person name="Waterman M.S."/>
            <person name="Eichler E.E."/>
            <person name="Adams M.D."/>
            <person name="Hunkapiller M.W."/>
            <person name="Myers E.W."/>
            <person name="Venter J.C."/>
        </authorList>
    </citation>
    <scope>NUCLEOTIDE SEQUENCE [LARGE SCALE GENOMIC DNA]</scope>
</reference>
<reference key="5">
    <citation type="journal article" date="2004" name="Genome Res.">
        <title>The status, quality, and expansion of the NIH full-length cDNA project: the Mammalian Gene Collection (MGC).</title>
        <authorList>
            <consortium name="The MGC Project Team"/>
        </authorList>
    </citation>
    <scope>NUCLEOTIDE SEQUENCE [LARGE SCALE MRNA] (ISOFORM 1)</scope>
    <scope>NUCLEOTIDE SEQUENCE [LARGE SCALE MRNA] OF 624-840 (ISOFORM 2)</scope>
    <scope>VARIANT MET-221</scope>
    <source>
        <tissue>Lymph</tissue>
        <tissue>Mammary gland</tissue>
    </source>
</reference>
<reference key="6">
    <citation type="journal article" date="2004" name="Nat. Genet.">
        <title>Complete sequencing and characterization of 21,243 full-length human cDNAs.</title>
        <authorList>
            <person name="Ota T."/>
            <person name="Suzuki Y."/>
            <person name="Nishikawa T."/>
            <person name="Otsuki T."/>
            <person name="Sugiyama T."/>
            <person name="Irie R."/>
            <person name="Wakamatsu A."/>
            <person name="Hayashi K."/>
            <person name="Sato H."/>
            <person name="Nagai K."/>
            <person name="Kimura K."/>
            <person name="Makita H."/>
            <person name="Sekine M."/>
            <person name="Obayashi M."/>
            <person name="Nishi T."/>
            <person name="Shibahara T."/>
            <person name="Tanaka T."/>
            <person name="Ishii S."/>
            <person name="Yamamoto J."/>
            <person name="Saito K."/>
            <person name="Kawai Y."/>
            <person name="Isono Y."/>
            <person name="Nakamura Y."/>
            <person name="Nagahari K."/>
            <person name="Murakami K."/>
            <person name="Yasuda T."/>
            <person name="Iwayanagi T."/>
            <person name="Wagatsuma M."/>
            <person name="Shiratori A."/>
            <person name="Sudo H."/>
            <person name="Hosoiri T."/>
            <person name="Kaku Y."/>
            <person name="Kodaira H."/>
            <person name="Kondo H."/>
            <person name="Sugawara M."/>
            <person name="Takahashi M."/>
            <person name="Kanda K."/>
            <person name="Yokoi T."/>
            <person name="Furuya T."/>
            <person name="Kikkawa E."/>
            <person name="Omura Y."/>
            <person name="Abe K."/>
            <person name="Kamihara K."/>
            <person name="Katsuta N."/>
            <person name="Sato K."/>
            <person name="Tanikawa M."/>
            <person name="Yamazaki M."/>
            <person name="Ninomiya K."/>
            <person name="Ishibashi T."/>
            <person name="Yamashita H."/>
            <person name="Murakawa K."/>
            <person name="Fujimori K."/>
            <person name="Tanai H."/>
            <person name="Kimata M."/>
            <person name="Watanabe M."/>
            <person name="Hiraoka S."/>
            <person name="Chiba Y."/>
            <person name="Ishida S."/>
            <person name="Ono Y."/>
            <person name="Takiguchi S."/>
            <person name="Watanabe S."/>
            <person name="Yosida M."/>
            <person name="Hotuta T."/>
            <person name="Kusano J."/>
            <person name="Kanehori K."/>
            <person name="Takahashi-Fujii A."/>
            <person name="Hara H."/>
            <person name="Tanase T.-O."/>
            <person name="Nomura Y."/>
            <person name="Togiya S."/>
            <person name="Komai F."/>
            <person name="Hara R."/>
            <person name="Takeuchi K."/>
            <person name="Arita M."/>
            <person name="Imose N."/>
            <person name="Musashino K."/>
            <person name="Yuuki H."/>
            <person name="Oshima A."/>
            <person name="Sasaki N."/>
            <person name="Aotsuka S."/>
            <person name="Yoshikawa Y."/>
            <person name="Matsunawa H."/>
            <person name="Ichihara T."/>
            <person name="Shiohata N."/>
            <person name="Sano S."/>
            <person name="Moriya S."/>
            <person name="Momiyama H."/>
            <person name="Satoh N."/>
            <person name="Takami S."/>
            <person name="Terashima Y."/>
            <person name="Suzuki O."/>
            <person name="Nakagawa S."/>
            <person name="Senoh A."/>
            <person name="Mizoguchi H."/>
            <person name="Goto Y."/>
            <person name="Shimizu F."/>
            <person name="Wakebe H."/>
            <person name="Hishigaki H."/>
            <person name="Watanabe T."/>
            <person name="Sugiyama A."/>
            <person name="Takemoto M."/>
            <person name="Kawakami B."/>
            <person name="Yamazaki M."/>
            <person name="Watanabe K."/>
            <person name="Kumagai A."/>
            <person name="Itakura S."/>
            <person name="Fukuzumi Y."/>
            <person name="Fujimori Y."/>
            <person name="Komiyama M."/>
            <person name="Tashiro H."/>
            <person name="Tanigami A."/>
            <person name="Fujiwara T."/>
            <person name="Ono T."/>
            <person name="Yamada K."/>
            <person name="Fujii Y."/>
            <person name="Ozaki K."/>
            <person name="Hirao M."/>
            <person name="Ohmori Y."/>
            <person name="Kawabata A."/>
            <person name="Hikiji T."/>
            <person name="Kobatake N."/>
            <person name="Inagaki H."/>
            <person name="Ikema Y."/>
            <person name="Okamoto S."/>
            <person name="Okitani R."/>
            <person name="Kawakami T."/>
            <person name="Noguchi S."/>
            <person name="Itoh T."/>
            <person name="Shigeta K."/>
            <person name="Senba T."/>
            <person name="Matsumura K."/>
            <person name="Nakajima Y."/>
            <person name="Mizuno T."/>
            <person name="Morinaga M."/>
            <person name="Sasaki M."/>
            <person name="Togashi T."/>
            <person name="Oyama M."/>
            <person name="Hata H."/>
            <person name="Watanabe M."/>
            <person name="Komatsu T."/>
            <person name="Mizushima-Sugano J."/>
            <person name="Satoh T."/>
            <person name="Shirai Y."/>
            <person name="Takahashi Y."/>
            <person name="Nakagawa K."/>
            <person name="Okumura K."/>
            <person name="Nagase T."/>
            <person name="Nomura N."/>
            <person name="Kikuchi H."/>
            <person name="Masuho Y."/>
            <person name="Yamashita R."/>
            <person name="Nakai K."/>
            <person name="Yada T."/>
            <person name="Nakamura Y."/>
            <person name="Ohara O."/>
            <person name="Isogai T."/>
            <person name="Sugano S."/>
        </authorList>
    </citation>
    <scope>NUCLEOTIDE SEQUENCE [LARGE SCALE MRNA] OF 437-840 (ISOFORM 1)</scope>
</reference>
<reference key="7">
    <citation type="journal article" date="2003" name="Nucleic Acids Res.">
        <title>Human EFO1p exhibits acetyltransferase activity and is a unique combination of linker histone and Ctf7p/Eco1p chromatid cohesion establishment domains.</title>
        <authorList>
            <person name="Bellows A.M."/>
            <person name="Kenna M.A."/>
            <person name="Cassimeris L."/>
            <person name="Skibbens R.V."/>
        </authorList>
    </citation>
    <scope>IDENTIFICATION (ISOFORM 1)</scope>
    <scope>FUNCTION</scope>
    <scope>CATALYTIC ACTIVITY</scope>
    <scope>SUBCELLULAR LOCATION</scope>
    <scope>TISSUE SPECIFICITY</scope>
</reference>
<reference key="8">
    <citation type="journal article" date="2005" name="Mol. Biol. Cell">
        <title>Two human orthologues of Eco1/Ctf7 acetyltransferases are both required for proper sister-chromatid cohesion.</title>
        <authorList>
            <person name="Hou F."/>
            <person name="Zou H."/>
        </authorList>
    </citation>
    <scope>FUNCTION</scope>
    <scope>CATALYTIC ACTIVITY</scope>
    <scope>ASSOCIATION WITH CHROMOSOMES</scope>
    <scope>SUBCELLULAR LOCATION</scope>
    <scope>PHOSPHORYLATION</scope>
    <scope>MUTAGENESIS OF CYS-622; GLY-768; 779-ARG-ARG-780; 782-ARG-ILE-783 AND GLU-789</scope>
</reference>
<reference key="9">
    <citation type="journal article" date="2008" name="Mol. Cell">
        <title>Acetylation of Smc3 by Eco1 is required for S phase sister chromatid cohesion in both human and yeast.</title>
        <authorList>
            <person name="Zhang J."/>
            <person name="Shi X."/>
            <person name="Li Y."/>
            <person name="Kim B.J."/>
            <person name="Jia J."/>
            <person name="Huang Z."/>
            <person name="Yang T."/>
            <person name="Fu X."/>
            <person name="Jung S.Y."/>
            <person name="Wang Y."/>
            <person name="Zhang P."/>
            <person name="Kim S.T."/>
            <person name="Pan X."/>
            <person name="Qin J."/>
        </authorList>
    </citation>
    <scope>FUNCTION</scope>
    <scope>CATALYTIC ACTIVITY</scope>
</reference>
<reference key="10">
    <citation type="journal article" date="2008" name="Proc. Natl. Acad. Sci. U.S.A.">
        <title>A quantitative atlas of mitotic phosphorylation.</title>
        <authorList>
            <person name="Dephoure N."/>
            <person name="Zhou C."/>
            <person name="Villen J."/>
            <person name="Beausoleil S.A."/>
            <person name="Bakalarski C.E."/>
            <person name="Elledge S.J."/>
            <person name="Gygi S.P."/>
        </authorList>
    </citation>
    <scope>PHOSPHORYLATION [LARGE SCALE ANALYSIS] AT SER-200</scope>
    <scope>IDENTIFICATION BY MASS SPECTROMETRY [LARGE SCALE ANALYSIS]</scope>
    <source>
        <tissue>Cervix carcinoma</tissue>
    </source>
</reference>
<reference key="11">
    <citation type="journal article" date="2009" name="Nature">
        <title>Cohesin acetylation speeds the replication fork.</title>
        <authorList>
            <person name="Terret M.E."/>
            <person name="Sherwood R."/>
            <person name="Rahman S."/>
            <person name="Qin J."/>
            <person name="Jallepalli P.V."/>
        </authorList>
    </citation>
    <scope>FUNCTION</scope>
    <scope>SUBCELLULAR LOCATION</scope>
</reference>
<reference key="12">
    <citation type="journal article" date="2010" name="Sci. Signal.">
        <title>Quantitative phosphoproteomics reveals widespread full phosphorylation site occupancy during mitosis.</title>
        <authorList>
            <person name="Olsen J.V."/>
            <person name="Vermeulen M."/>
            <person name="Santamaria A."/>
            <person name="Kumar C."/>
            <person name="Miller M.L."/>
            <person name="Jensen L.J."/>
            <person name="Gnad F."/>
            <person name="Cox J."/>
            <person name="Jensen T.S."/>
            <person name="Nigg E.A."/>
            <person name="Brunak S."/>
            <person name="Mann M."/>
        </authorList>
    </citation>
    <scope>PHOSPHORYLATION [LARGE SCALE ANALYSIS] AT SER-200 AND SER-412</scope>
    <scope>IDENTIFICATION BY MASS SPECTROMETRY [LARGE SCALE ANALYSIS]</scope>
    <source>
        <tissue>Cervix carcinoma</tissue>
    </source>
</reference>
<reference key="13">
    <citation type="journal article" date="2013" name="J. Proteome Res.">
        <title>Toward a comprehensive characterization of a human cancer cell phosphoproteome.</title>
        <authorList>
            <person name="Zhou H."/>
            <person name="Di Palma S."/>
            <person name="Preisinger C."/>
            <person name="Peng M."/>
            <person name="Polat A.N."/>
            <person name="Heck A.J."/>
            <person name="Mohammed S."/>
        </authorList>
    </citation>
    <scope>PHOSPHORYLATION [LARGE SCALE ANALYSIS] AT SER-200</scope>
    <scope>IDENTIFICATION BY MASS SPECTROMETRY [LARGE SCALE ANALYSIS]</scope>
    <source>
        <tissue>Erythroleukemia</tissue>
    </source>
</reference>
<reference key="14">
    <citation type="journal article" date="2015" name="Cell Rep.">
        <title>SUMO-2 orchestrates chromatin modifiers in response to DNA damage.</title>
        <authorList>
            <person name="Hendriks I.A."/>
            <person name="Treffers L.W."/>
            <person name="Verlaan-de Vries M."/>
            <person name="Olsen J.V."/>
            <person name="Vertegaal A.C."/>
        </authorList>
    </citation>
    <scope>SUMOYLATION [LARGE SCALE ANALYSIS] AT LYS-332</scope>
    <scope>IDENTIFICATION BY MASS SPECTROMETRY [LARGE SCALE ANALYSIS]</scope>
</reference>
<reference evidence="15" key="15">
    <citation type="journal article" date="2016" name="J. Biol. Chem.">
        <title>Molecular Basis for Cohesin Acetylation by Establishment of Sister Chromatid Cohesion N-Acetyltransferase ESCO1.</title>
        <authorList>
            <person name="Rivera-Colon Y."/>
            <person name="Maguire A."/>
            <person name="Liszczak G.P."/>
            <person name="Olia A.S."/>
            <person name="Marmorstein R."/>
        </authorList>
    </citation>
    <scope>X-RAY CRYSTALLOGRAPHY (2.70 ANGSTROMS) OF 599-825 IN COMPLEX WITH ACETYL-COA AND ZINC IONS</scope>
    <scope>FUNCTION</scope>
    <scope>CATALYTIC ACTIVITY</scope>
    <scope>BIOPHYSICOCHEMICAL PROPERTIES</scope>
    <scope>SUBUNIT</scope>
    <scope>MUTAGENESIS OF PHE-640; GLN-643; PHE-644; ASP-690; GLU-725; ARG-732; GLU-735; GLU-736; TRP-756; SER-770; ARG-771; TRP-773; ARG-786; SER-809 AND GLY-815</scope>
</reference>
<reference evidence="14" key="16">
    <citation type="journal article" date="2016" name="Structure">
        <title>Sister Chromatid Cohesion Establishment Factor ESCO1 Operates by Substrate-Assisted Catalysis.</title>
        <authorList>
            <person name="Kouznetsova E."/>
            <person name="Kanno T."/>
            <person name="Karlberg T."/>
            <person name="Thorsell A.G."/>
            <person name="Wisniewska M."/>
            <person name="Kursula P."/>
            <person name="Sjogren C."/>
            <person name="Schuler H."/>
        </authorList>
    </citation>
    <scope>X-RAY CRYSTALLOGRAPHY (2.60 ANGSTROMS) OF 654-836 IN COMPLEX WITH ACETYL-COA</scope>
    <scope>FUNCTION</scope>
    <scope>CATALYTIC ACTIVITY</scope>
    <scope>SUBUNIT</scope>
    <scope>MUTAGENESIS OF GLY-768; ARG-780; GLU-789 AND LYS-803</scope>
</reference>
<gene>
    <name type="primary">ESCO1</name>
    <name type="synonym">EFO1</name>
    <name type="synonym">KIAA1911</name>
</gene>
<dbReference type="EC" id="2.3.1.-" evidence="2 4 5"/>
<dbReference type="EMBL" id="AB067498">
    <property type="protein sequence ID" value="BAB67804.1"/>
    <property type="status" value="ALT_INIT"/>
    <property type="molecule type" value="mRNA"/>
</dbReference>
<dbReference type="EMBL" id="AL832041">
    <property type="protein sequence ID" value="CAH10584.1"/>
    <property type="molecule type" value="mRNA"/>
</dbReference>
<dbReference type="EMBL" id="AL834200">
    <property type="protein sequence ID" value="CAH10682.1"/>
    <property type="molecule type" value="mRNA"/>
</dbReference>
<dbReference type="EMBL" id="EF444976">
    <property type="protein sequence ID" value="ACA05989.1"/>
    <property type="molecule type" value="Genomic_DNA"/>
</dbReference>
<dbReference type="EMBL" id="EF444976">
    <property type="protein sequence ID" value="ACA05990.1"/>
    <property type="molecule type" value="Genomic_DNA"/>
</dbReference>
<dbReference type="EMBL" id="CH471088">
    <property type="protein sequence ID" value="EAX01128.1"/>
    <property type="molecule type" value="Genomic_DNA"/>
</dbReference>
<dbReference type="EMBL" id="CH471088">
    <property type="protein sequence ID" value="EAX01127.1"/>
    <property type="molecule type" value="Genomic_DNA"/>
</dbReference>
<dbReference type="EMBL" id="BC036943">
    <property type="protein sequence ID" value="AAH36943.1"/>
    <property type="status" value="ALT_SEQ"/>
    <property type="molecule type" value="mRNA"/>
</dbReference>
<dbReference type="EMBL" id="BC089426">
    <property type="protein sequence ID" value="AAH89426.1"/>
    <property type="molecule type" value="mRNA"/>
</dbReference>
<dbReference type="EMBL" id="AK090579">
    <property type="protein sequence ID" value="BAC03483.1"/>
    <property type="status" value="ALT_INIT"/>
    <property type="molecule type" value="mRNA"/>
</dbReference>
<dbReference type="EMBL" id="BK001617">
    <property type="protein sequence ID" value="DAA02068.1"/>
    <property type="molecule type" value="mRNA"/>
</dbReference>
<dbReference type="CCDS" id="CCDS32800.1">
    <molecule id="Q5FWF5-1"/>
</dbReference>
<dbReference type="RefSeq" id="NP_443143.2">
    <molecule id="Q5FWF5-1"/>
    <property type="nucleotide sequence ID" value="NM_052911.3"/>
</dbReference>
<dbReference type="RefSeq" id="XP_011524100.1">
    <molecule id="Q5FWF5-1"/>
    <property type="nucleotide sequence ID" value="XM_011525798.2"/>
</dbReference>
<dbReference type="RefSeq" id="XP_047293242.1">
    <molecule id="Q5FWF5-2"/>
    <property type="nucleotide sequence ID" value="XM_047437286.1"/>
</dbReference>
<dbReference type="PDB" id="4MXE">
    <property type="method" value="X-ray"/>
    <property type="resolution" value="2.60 A"/>
    <property type="chains" value="A/B=654-836"/>
</dbReference>
<dbReference type="PDB" id="5T53">
    <property type="method" value="X-ray"/>
    <property type="resolution" value="2.70 A"/>
    <property type="chains" value="A=599-825"/>
</dbReference>
<dbReference type="PDBsum" id="4MXE"/>
<dbReference type="PDBsum" id="5T53"/>
<dbReference type="SMR" id="Q5FWF5"/>
<dbReference type="BioGRID" id="125360">
    <property type="interactions" value="39"/>
</dbReference>
<dbReference type="CORUM" id="Q5FWF5"/>
<dbReference type="DIP" id="DIP-56674N"/>
<dbReference type="FunCoup" id="Q5FWF5">
    <property type="interactions" value="3347"/>
</dbReference>
<dbReference type="IntAct" id="Q5FWF5">
    <property type="interactions" value="19"/>
</dbReference>
<dbReference type="STRING" id="9606.ENSP00000269214"/>
<dbReference type="CarbonylDB" id="Q5FWF5"/>
<dbReference type="GlyCosmos" id="Q5FWF5">
    <property type="glycosylation" value="1 site, 1 glycan"/>
</dbReference>
<dbReference type="GlyGen" id="Q5FWF5">
    <property type="glycosylation" value="6 sites, 1 O-linked glycan (6 sites)"/>
</dbReference>
<dbReference type="iPTMnet" id="Q5FWF5"/>
<dbReference type="PhosphoSitePlus" id="Q5FWF5"/>
<dbReference type="BioMuta" id="ESCO1"/>
<dbReference type="DMDM" id="116241355"/>
<dbReference type="jPOST" id="Q5FWF5"/>
<dbReference type="MassIVE" id="Q5FWF5"/>
<dbReference type="PaxDb" id="9606-ENSP00000269214"/>
<dbReference type="PeptideAtlas" id="Q5FWF5"/>
<dbReference type="ProteomicsDB" id="62814">
    <molecule id="Q5FWF5-1"/>
</dbReference>
<dbReference type="ProteomicsDB" id="62815">
    <molecule id="Q5FWF5-2"/>
</dbReference>
<dbReference type="Pumba" id="Q5FWF5"/>
<dbReference type="Antibodypedia" id="21999">
    <property type="antibodies" value="62 antibodies from 18 providers"/>
</dbReference>
<dbReference type="DNASU" id="114799"/>
<dbReference type="Ensembl" id="ENST00000269214.10">
    <molecule id="Q5FWF5-1"/>
    <property type="protein sequence ID" value="ENSP00000269214.4"/>
    <property type="gene ID" value="ENSG00000141446.12"/>
</dbReference>
<dbReference type="Ensembl" id="ENST00000383276.2">
    <molecule id="Q5FWF5-2"/>
    <property type="protein sequence ID" value="ENSP00000372763.1"/>
    <property type="gene ID" value="ENSG00000141446.12"/>
</dbReference>
<dbReference type="GeneID" id="114799"/>
<dbReference type="KEGG" id="hsa:114799"/>
<dbReference type="MANE-Select" id="ENST00000269214.10">
    <property type="protein sequence ID" value="ENSP00000269214.4"/>
    <property type="RefSeq nucleotide sequence ID" value="NM_052911.3"/>
    <property type="RefSeq protein sequence ID" value="NP_443143.2"/>
</dbReference>
<dbReference type="UCSC" id="uc002kth.2">
    <molecule id="Q5FWF5-1"/>
    <property type="organism name" value="human"/>
</dbReference>
<dbReference type="AGR" id="HGNC:24645"/>
<dbReference type="CTD" id="114799"/>
<dbReference type="DisGeNET" id="114799"/>
<dbReference type="GeneCards" id="ESCO1"/>
<dbReference type="HGNC" id="HGNC:24645">
    <property type="gene designation" value="ESCO1"/>
</dbReference>
<dbReference type="HPA" id="ENSG00000141446">
    <property type="expression patterns" value="Low tissue specificity"/>
</dbReference>
<dbReference type="MIM" id="609674">
    <property type="type" value="gene"/>
</dbReference>
<dbReference type="neXtProt" id="NX_Q5FWF5"/>
<dbReference type="OpenTargets" id="ENSG00000141446"/>
<dbReference type="PharmGKB" id="PA134924215"/>
<dbReference type="VEuPathDB" id="HostDB:ENSG00000141446"/>
<dbReference type="eggNOG" id="KOG3014">
    <property type="taxonomic scope" value="Eukaryota"/>
</dbReference>
<dbReference type="GeneTree" id="ENSGT00940000157762"/>
<dbReference type="HOGENOM" id="CLU_012128_0_0_1"/>
<dbReference type="InParanoid" id="Q5FWF5"/>
<dbReference type="OMA" id="KEHCNST"/>
<dbReference type="OrthoDB" id="428854at2759"/>
<dbReference type="PAN-GO" id="Q5FWF5">
    <property type="GO annotations" value="4 GO annotations based on evolutionary models"/>
</dbReference>
<dbReference type="PhylomeDB" id="Q5FWF5"/>
<dbReference type="TreeFam" id="TF314027"/>
<dbReference type="PathwayCommons" id="Q5FWF5"/>
<dbReference type="Reactome" id="R-HSA-2468052">
    <property type="pathway name" value="Establishment of Sister Chromatid Cohesion"/>
</dbReference>
<dbReference type="SignaLink" id="Q5FWF5"/>
<dbReference type="SIGNOR" id="Q5FWF5"/>
<dbReference type="BioGRID-ORCS" id="114799">
    <property type="hits" value="19 hits in 1162 CRISPR screens"/>
</dbReference>
<dbReference type="ChiTaRS" id="ESCO1">
    <property type="organism name" value="human"/>
</dbReference>
<dbReference type="EvolutionaryTrace" id="Q5FWF5"/>
<dbReference type="GenomeRNAi" id="114799"/>
<dbReference type="Pharos" id="Q5FWF5">
    <property type="development level" value="Tbio"/>
</dbReference>
<dbReference type="PRO" id="PR:Q5FWF5"/>
<dbReference type="Proteomes" id="UP000005640">
    <property type="component" value="Chromosome 18"/>
</dbReference>
<dbReference type="RNAct" id="Q5FWF5">
    <property type="molecule type" value="protein"/>
</dbReference>
<dbReference type="Bgee" id="ENSG00000141446">
    <property type="expression patterns" value="Expressed in oviduct epithelium and 185 other cell types or tissues"/>
</dbReference>
<dbReference type="ExpressionAtlas" id="Q5FWF5">
    <property type="expression patterns" value="baseline and differential"/>
</dbReference>
<dbReference type="GO" id="GO:0000785">
    <property type="term" value="C:chromatin"/>
    <property type="evidence" value="ECO:0000314"/>
    <property type="project" value="UniProtKB"/>
</dbReference>
<dbReference type="GO" id="GO:0005694">
    <property type="term" value="C:chromosome"/>
    <property type="evidence" value="ECO:0000314"/>
    <property type="project" value="UniProtKB"/>
</dbReference>
<dbReference type="GO" id="GO:0005654">
    <property type="term" value="C:nucleoplasm"/>
    <property type="evidence" value="ECO:0000304"/>
    <property type="project" value="Reactome"/>
</dbReference>
<dbReference type="GO" id="GO:0005634">
    <property type="term" value="C:nucleus"/>
    <property type="evidence" value="ECO:0000318"/>
    <property type="project" value="GO_Central"/>
</dbReference>
<dbReference type="GO" id="GO:0016407">
    <property type="term" value="F:acetyltransferase activity"/>
    <property type="evidence" value="ECO:0000314"/>
    <property type="project" value="UniProtKB"/>
</dbReference>
<dbReference type="GO" id="GO:0042802">
    <property type="term" value="F:identical protein binding"/>
    <property type="evidence" value="ECO:0000353"/>
    <property type="project" value="IntAct"/>
</dbReference>
<dbReference type="GO" id="GO:0008080">
    <property type="term" value="F:N-acetyltransferase activity"/>
    <property type="evidence" value="ECO:0000314"/>
    <property type="project" value="UniProtKB"/>
</dbReference>
<dbReference type="GO" id="GO:0061733">
    <property type="term" value="F:protein-lysine-acetyltransferase activity"/>
    <property type="evidence" value="ECO:0000314"/>
    <property type="project" value="UniProtKB"/>
</dbReference>
<dbReference type="GO" id="GO:0008270">
    <property type="term" value="F:zinc ion binding"/>
    <property type="evidence" value="ECO:0000314"/>
    <property type="project" value="UniProtKB"/>
</dbReference>
<dbReference type="GO" id="GO:0007064">
    <property type="term" value="P:mitotic sister chromatid cohesion"/>
    <property type="evidence" value="ECO:0000318"/>
    <property type="project" value="GO_Central"/>
</dbReference>
<dbReference type="GO" id="GO:0018394">
    <property type="term" value="P:peptidyl-lysine acetylation"/>
    <property type="evidence" value="ECO:0000314"/>
    <property type="project" value="UniProtKB"/>
</dbReference>
<dbReference type="GO" id="GO:0034421">
    <property type="term" value="P:post-translational protein acetylation"/>
    <property type="evidence" value="ECO:0000315"/>
    <property type="project" value="UniProtKB"/>
</dbReference>
<dbReference type="GO" id="GO:0006275">
    <property type="term" value="P:regulation of DNA replication"/>
    <property type="evidence" value="ECO:0000315"/>
    <property type="project" value="UniProtKB"/>
</dbReference>
<dbReference type="GO" id="GO:0007062">
    <property type="term" value="P:sister chromatid cohesion"/>
    <property type="evidence" value="ECO:0000304"/>
    <property type="project" value="Reactome"/>
</dbReference>
<dbReference type="DisProt" id="DP02851"/>
<dbReference type="InterPro" id="IPR028005">
    <property type="entry name" value="AcTrfase_ESCO_Znf_dom"/>
</dbReference>
<dbReference type="InterPro" id="IPR028009">
    <property type="entry name" value="ESCO_Acetyltransf_dom"/>
</dbReference>
<dbReference type="PANTHER" id="PTHR45884">
    <property type="entry name" value="N-ACETYLTRANSFERASE ECO"/>
    <property type="match status" value="1"/>
</dbReference>
<dbReference type="PANTHER" id="PTHR45884:SF1">
    <property type="entry name" value="N-ACETYLTRANSFERASE ESCO1"/>
    <property type="match status" value="1"/>
</dbReference>
<dbReference type="Pfam" id="PF13880">
    <property type="entry name" value="Acetyltransf_13"/>
    <property type="match status" value="1"/>
</dbReference>
<dbReference type="Pfam" id="PF13878">
    <property type="entry name" value="zf-C2H2_3"/>
    <property type="match status" value="1"/>
</dbReference>
<protein>
    <recommendedName>
        <fullName>N-acetyltransferase ESCO1</fullName>
        <ecNumber evidence="2 4 5">2.3.1.-</ecNumber>
    </recommendedName>
    <alternativeName>
        <fullName>CTF7 homolog 1</fullName>
    </alternativeName>
    <alternativeName>
        <fullName evidence="9">Establishment factor-like protein 1</fullName>
        <shortName evidence="11">EFO1</shortName>
        <shortName evidence="9">EFO1p</shortName>
        <shortName>hEFO1</shortName>
    </alternativeName>
    <alternativeName>
        <fullName>Establishment of cohesion 1 homolog 1</fullName>
        <shortName>ECO1 homolog 1</shortName>
        <shortName>ESO1 homolog 1</shortName>
    </alternativeName>
</protein>
<feature type="chain" id="PRO_0000074539" description="N-acetyltransferase ESCO1">
    <location>
        <begin position="1"/>
        <end position="840"/>
    </location>
</feature>
<feature type="zinc finger region" description="CCHH-type" evidence="8">
    <location>
        <begin position="617"/>
        <end position="641"/>
    </location>
</feature>
<feature type="region of interest" description="Disordered" evidence="1">
    <location>
        <begin position="1"/>
        <end position="188"/>
    </location>
</feature>
<feature type="region of interest" description="Disordered" evidence="1">
    <location>
        <begin position="221"/>
        <end position="300"/>
    </location>
</feature>
<feature type="region of interest" description="Disordered" evidence="1">
    <location>
        <begin position="318"/>
        <end position="338"/>
    </location>
</feature>
<feature type="region of interest" description="Disordered" evidence="1">
    <location>
        <begin position="486"/>
        <end position="505"/>
    </location>
</feature>
<feature type="region of interest" description="Disordered" evidence="1">
    <location>
        <begin position="542"/>
        <end position="582"/>
    </location>
</feature>
<feature type="compositionally biased region" description="Basic and acidic residues" evidence="1">
    <location>
        <begin position="1"/>
        <end position="25"/>
    </location>
</feature>
<feature type="compositionally biased region" description="Polar residues" evidence="1">
    <location>
        <begin position="46"/>
        <end position="58"/>
    </location>
</feature>
<feature type="compositionally biased region" description="Polar residues" evidence="1">
    <location>
        <begin position="65"/>
        <end position="74"/>
    </location>
</feature>
<feature type="compositionally biased region" description="Polar residues" evidence="1">
    <location>
        <begin position="81"/>
        <end position="96"/>
    </location>
</feature>
<feature type="compositionally biased region" description="Basic and acidic residues" evidence="1">
    <location>
        <begin position="131"/>
        <end position="140"/>
    </location>
</feature>
<feature type="compositionally biased region" description="Polar residues" evidence="1">
    <location>
        <begin position="141"/>
        <end position="153"/>
    </location>
</feature>
<feature type="compositionally biased region" description="Low complexity" evidence="1">
    <location>
        <begin position="161"/>
        <end position="170"/>
    </location>
</feature>
<feature type="compositionally biased region" description="Basic and acidic residues" evidence="1">
    <location>
        <begin position="178"/>
        <end position="188"/>
    </location>
</feature>
<feature type="compositionally biased region" description="Polar residues" evidence="1">
    <location>
        <begin position="267"/>
        <end position="278"/>
    </location>
</feature>
<feature type="compositionally biased region" description="Basic and acidic residues" evidence="1">
    <location>
        <begin position="319"/>
        <end position="338"/>
    </location>
</feature>
<feature type="compositionally biased region" description="Polar residues" evidence="1">
    <location>
        <begin position="551"/>
        <end position="565"/>
    </location>
</feature>
<feature type="binding site" evidence="7 8 14 15">
    <location>
        <begin position="772"/>
        <end position="774"/>
    </location>
    <ligand>
        <name>acetyl-CoA</name>
        <dbReference type="ChEBI" id="CHEBI:57288"/>
    </ligand>
</feature>
<feature type="binding site" evidence="7 8 14 15">
    <location>
        <begin position="780"/>
        <end position="785"/>
    </location>
    <ligand>
        <name>acetyl-CoA</name>
        <dbReference type="ChEBI" id="CHEBI:57288"/>
    </ligand>
</feature>
<feature type="binding site" evidence="7 8 14 15">
    <location>
        <begin position="812"/>
        <end position="814"/>
    </location>
    <ligand>
        <name>acetyl-CoA</name>
        <dbReference type="ChEBI" id="CHEBI:57288"/>
    </ligand>
</feature>
<feature type="modified residue" description="Phosphoserine" evidence="16 17 18">
    <location>
        <position position="200"/>
    </location>
</feature>
<feature type="modified residue" description="Phosphoserine" evidence="17">
    <location>
        <position position="412"/>
    </location>
</feature>
<feature type="cross-link" description="Glycyl lysine isopeptide (Lys-Gly) (interchain with G-Cter in SUMO2)" evidence="19">
    <location>
        <position position="332"/>
    </location>
</feature>
<feature type="splice variant" id="VSP_014029" description="In isoform 2." evidence="10 12">
    <original>GWKKERILAEYPDGRIIMVLPEDPKYALKKVDEIREMVDNDLGFQQAPLM</original>
    <variation>VLLINHHECGSEEEFITSLFLSMFNFRYTQRSFSFPIRFLEGLEERKNSG</variation>
    <location>
        <begin position="652"/>
        <end position="701"/>
    </location>
</feature>
<feature type="splice variant" id="VSP_014030" description="In isoform 2." evidence="10 12">
    <location>
        <begin position="702"/>
        <end position="840"/>
    </location>
</feature>
<feature type="sequence variant" id="VAR_048167" description="In dbSNP:rs35087820.">
    <original>N</original>
    <variation>S</variation>
    <location>
        <position position="191"/>
    </location>
</feature>
<feature type="sequence variant" id="VAR_022648" description="In dbSNP:rs13381941." evidence="3">
    <original>T</original>
    <variation>M</variation>
    <location>
        <position position="221"/>
    </location>
</feature>
<feature type="mutagenesis site" description="No effect on association with chromosomes." evidence="4">
    <original>C</original>
    <variation>G</variation>
    <location>
        <position position="622"/>
    </location>
</feature>
<feature type="mutagenesis site" description="Strongly decreased enzyme activity." evidence="8">
    <original>F</original>
    <variation>A</variation>
    <location>
        <position position="640"/>
    </location>
</feature>
<feature type="mutagenesis site" description="Strongly decreased enzyme activity." evidence="8">
    <original>Q</original>
    <variation>A</variation>
    <location>
        <position position="643"/>
    </location>
</feature>
<feature type="mutagenesis site" description="Strongly decreased enzyme activity." evidence="8">
    <original>F</original>
    <variation>A</variation>
    <location>
        <position position="644"/>
    </location>
</feature>
<feature type="mutagenesis site" description="Strongly decreased enzyme activity." evidence="8">
    <original>D</original>
    <variation>N</variation>
    <location>
        <position position="690"/>
    </location>
</feature>
<feature type="mutagenesis site" description="Strongly decreased enzyme activity." evidence="8">
    <original>E</original>
    <variation>A</variation>
    <location>
        <position position="725"/>
    </location>
</feature>
<feature type="mutagenesis site" description="Strongly decreased enzyme activity." evidence="8">
    <original>R</original>
    <variation>A</variation>
    <location>
        <position position="732"/>
    </location>
</feature>
<feature type="mutagenesis site" description="Strongly decreased enzyme activity." evidence="8">
    <original>E</original>
    <variation>A</variation>
    <location>
        <position position="735"/>
    </location>
</feature>
<feature type="mutagenesis site" description="Strongly decreased enzyme activity." evidence="8">
    <original>E</original>
    <variation>A</variation>
    <location>
        <position position="736"/>
    </location>
</feature>
<feature type="mutagenesis site" description="Strongly decreased enzyme activity." evidence="8">
    <original>W</original>
    <variation>A</variation>
    <location>
        <position position="756"/>
    </location>
</feature>
<feature type="mutagenesis site" description="Loss of autoacetylation." evidence="4 7">
    <original>G</original>
    <variation>D</variation>
    <location>
        <position position="768"/>
    </location>
</feature>
<feature type="mutagenesis site" description="Strongly decreased enzyme activity." evidence="8">
    <original>S</original>
    <variation>A</variation>
    <location>
        <position position="770"/>
    </location>
</feature>
<feature type="mutagenesis site" description="Strongly decreased enzyme activity." evidence="8">
    <original>R</original>
    <variation>A</variation>
    <location>
        <position position="771"/>
    </location>
</feature>
<feature type="mutagenesis site" description="Decreased thermal stability. Strongly decreased enzyme activity." evidence="8">
    <original>W</original>
    <variation>G</variation>
    <location>
        <position position="773"/>
    </location>
</feature>
<feature type="mutagenesis site" description="Significant reduction in autoacetylation." evidence="4">
    <original>RR</original>
    <variation>GG</variation>
    <location>
        <begin position="779"/>
        <end position="780"/>
    </location>
</feature>
<feature type="mutagenesis site" description="Nearly abolishes autoacetylation." evidence="7">
    <original>R</original>
    <variation>A</variation>
    <location>
        <position position="780"/>
    </location>
</feature>
<feature type="mutagenesis site" description="Significant reduction in autoacetylation." evidence="4">
    <original>KI</original>
    <variation>EV</variation>
    <location>
        <begin position="782"/>
        <end position="783"/>
    </location>
</feature>
<feature type="mutagenesis site" description="Decreased thermal stability. Strongly decreased enzyme activity." evidence="8">
    <original>R</original>
    <variation>C</variation>
    <location>
        <position position="786"/>
    </location>
</feature>
<feature type="mutagenesis site" description="Reduced autoacetylation." evidence="4 7">
    <original>E</original>
    <variation>A</variation>
    <location>
        <position position="789"/>
    </location>
</feature>
<feature type="mutagenesis site" description="Strongly reduced autoacetylation." evidence="7">
    <original>K</original>
    <variation>A</variation>
    <location>
        <position position="803"/>
    </location>
</feature>
<feature type="mutagenesis site" description="Strongly decreased enzyme activity." evidence="8">
    <original>S</original>
    <variation>A</variation>
    <location>
        <position position="809"/>
    </location>
</feature>
<feature type="mutagenesis site" description="Strongly decreased enzyme activity. No effect on thermal stability." evidence="8">
    <original>G</original>
    <variation>R</variation>
    <location>
        <position position="815"/>
    </location>
</feature>
<feature type="sequence conflict" description="In Ref. 1; BAB67804." evidence="13" ref="1">
    <original>S</original>
    <variation>L</variation>
    <location>
        <position position="384"/>
    </location>
</feature>
<feature type="sequence conflict" description="In Ref. 2; CAH10682." evidence="13" ref="2">
    <original>P</original>
    <variation>S</variation>
    <location>
        <position position="432"/>
    </location>
</feature>
<feature type="sequence conflict" description="In Ref. 6; BAC03483." evidence="13" ref="6">
    <original>E</original>
    <variation>A</variation>
    <location>
        <position position="805"/>
    </location>
</feature>
<feature type="turn" evidence="21">
    <location>
        <begin position="620"/>
        <end position="622"/>
    </location>
</feature>
<feature type="helix" evidence="21">
    <location>
        <begin position="634"/>
        <end position="648"/>
    </location>
</feature>
<feature type="strand" evidence="20">
    <location>
        <begin position="658"/>
        <end position="661"/>
    </location>
</feature>
<feature type="strand" evidence="20">
    <location>
        <begin position="663"/>
        <end position="670"/>
    </location>
</feature>
<feature type="helix" evidence="20">
    <location>
        <begin position="676"/>
        <end position="689"/>
    </location>
</feature>
<feature type="helix" evidence="21">
    <location>
        <begin position="703"/>
        <end position="705"/>
    </location>
</feature>
<feature type="strand" evidence="20">
    <location>
        <begin position="707"/>
        <end position="713"/>
    </location>
</feature>
<feature type="strand" evidence="20">
    <location>
        <begin position="717"/>
        <end position="726"/>
    </location>
</feature>
<feature type="strand" evidence="20">
    <location>
        <begin position="728"/>
        <end position="739"/>
    </location>
</feature>
<feature type="strand" evidence="20">
    <location>
        <begin position="752"/>
        <end position="764"/>
    </location>
</feature>
<feature type="strand" evidence="20">
    <location>
        <begin position="766"/>
        <end position="774"/>
    </location>
</feature>
<feature type="helix" evidence="20">
    <location>
        <begin position="776"/>
        <end position="778"/>
    </location>
</feature>
<feature type="strand" evidence="20">
    <location>
        <begin position="780"/>
        <end position="782"/>
    </location>
</feature>
<feature type="helix" evidence="20">
    <location>
        <begin position="783"/>
        <end position="794"/>
    </location>
</feature>
<feature type="strand" evidence="20">
    <location>
        <begin position="805"/>
        <end position="810"/>
    </location>
</feature>
<feature type="helix" evidence="20">
    <location>
        <begin position="813"/>
        <end position="823"/>
    </location>
</feature>
<feature type="strand" evidence="20">
    <location>
        <begin position="827"/>
        <end position="833"/>
    </location>
</feature>